<feature type="chain" id="PRO_1000129759" description="Argininosuccinate synthase">
    <location>
        <begin position="1"/>
        <end position="445"/>
    </location>
</feature>
<feature type="binding site" evidence="1">
    <location>
        <begin position="17"/>
        <end position="25"/>
    </location>
    <ligand>
        <name>ATP</name>
        <dbReference type="ChEBI" id="CHEBI:30616"/>
    </ligand>
</feature>
<feature type="binding site" evidence="1">
    <location>
        <position position="43"/>
    </location>
    <ligand>
        <name>ATP</name>
        <dbReference type="ChEBI" id="CHEBI:30616"/>
    </ligand>
</feature>
<feature type="binding site" evidence="1">
    <location>
        <position position="99"/>
    </location>
    <ligand>
        <name>L-citrulline</name>
        <dbReference type="ChEBI" id="CHEBI:57743"/>
    </ligand>
</feature>
<feature type="binding site" evidence="1">
    <location>
        <position position="129"/>
    </location>
    <ligand>
        <name>ATP</name>
        <dbReference type="ChEBI" id="CHEBI:30616"/>
    </ligand>
</feature>
<feature type="binding site" evidence="1">
    <location>
        <position position="131"/>
    </location>
    <ligand>
        <name>ATP</name>
        <dbReference type="ChEBI" id="CHEBI:30616"/>
    </ligand>
</feature>
<feature type="binding site" evidence="1">
    <location>
        <position position="131"/>
    </location>
    <ligand>
        <name>L-aspartate</name>
        <dbReference type="ChEBI" id="CHEBI:29991"/>
    </ligand>
</feature>
<feature type="binding site" evidence="1">
    <location>
        <position position="135"/>
    </location>
    <ligand>
        <name>L-aspartate</name>
        <dbReference type="ChEBI" id="CHEBI:29991"/>
    </ligand>
</feature>
<feature type="binding site" evidence="1">
    <location>
        <position position="135"/>
    </location>
    <ligand>
        <name>L-citrulline</name>
        <dbReference type="ChEBI" id="CHEBI:57743"/>
    </ligand>
</feature>
<feature type="binding site" evidence="1">
    <location>
        <position position="136"/>
    </location>
    <ligand>
        <name>ATP</name>
        <dbReference type="ChEBI" id="CHEBI:30616"/>
    </ligand>
</feature>
<feature type="binding site" evidence="1">
    <location>
        <position position="136"/>
    </location>
    <ligand>
        <name>L-aspartate</name>
        <dbReference type="ChEBI" id="CHEBI:29991"/>
    </ligand>
</feature>
<feature type="binding site" evidence="1">
    <location>
        <position position="139"/>
    </location>
    <ligand>
        <name>L-citrulline</name>
        <dbReference type="ChEBI" id="CHEBI:57743"/>
    </ligand>
</feature>
<feature type="binding site" evidence="1">
    <location>
        <position position="192"/>
    </location>
    <ligand>
        <name>L-citrulline</name>
        <dbReference type="ChEBI" id="CHEBI:57743"/>
    </ligand>
</feature>
<feature type="binding site" evidence="1">
    <location>
        <position position="194"/>
    </location>
    <ligand>
        <name>ATP</name>
        <dbReference type="ChEBI" id="CHEBI:30616"/>
    </ligand>
</feature>
<feature type="binding site" evidence="1">
    <location>
        <position position="201"/>
    </location>
    <ligand>
        <name>L-citrulline</name>
        <dbReference type="ChEBI" id="CHEBI:57743"/>
    </ligand>
</feature>
<feature type="binding site" evidence="1">
    <location>
        <position position="203"/>
    </location>
    <ligand>
        <name>L-citrulline</name>
        <dbReference type="ChEBI" id="CHEBI:57743"/>
    </ligand>
</feature>
<feature type="binding site" evidence="1">
    <location>
        <position position="280"/>
    </location>
    <ligand>
        <name>L-citrulline</name>
        <dbReference type="ChEBI" id="CHEBI:57743"/>
    </ligand>
</feature>
<evidence type="ECO:0000255" key="1">
    <source>
        <dbReference type="HAMAP-Rule" id="MF_00581"/>
    </source>
</evidence>
<comment type="catalytic activity">
    <reaction evidence="1">
        <text>L-citrulline + L-aspartate + ATP = 2-(N(omega)-L-arginino)succinate + AMP + diphosphate + H(+)</text>
        <dbReference type="Rhea" id="RHEA:10932"/>
        <dbReference type="ChEBI" id="CHEBI:15378"/>
        <dbReference type="ChEBI" id="CHEBI:29991"/>
        <dbReference type="ChEBI" id="CHEBI:30616"/>
        <dbReference type="ChEBI" id="CHEBI:33019"/>
        <dbReference type="ChEBI" id="CHEBI:57472"/>
        <dbReference type="ChEBI" id="CHEBI:57743"/>
        <dbReference type="ChEBI" id="CHEBI:456215"/>
        <dbReference type="EC" id="6.3.4.5"/>
    </reaction>
</comment>
<comment type="pathway">
    <text evidence="1">Amino-acid biosynthesis; L-arginine biosynthesis; L-arginine from L-ornithine and carbamoyl phosphate: step 2/3.</text>
</comment>
<comment type="subunit">
    <text evidence="1">Homotetramer.</text>
</comment>
<comment type="subcellular location">
    <subcellularLocation>
        <location evidence="1">Cytoplasm</location>
    </subcellularLocation>
</comment>
<comment type="similarity">
    <text evidence="1">Belongs to the argininosuccinate synthase family. Type 2 subfamily.</text>
</comment>
<dbReference type="EC" id="6.3.4.5" evidence="1"/>
<dbReference type="EMBL" id="CP000529">
    <property type="protein sequence ID" value="ABM36399.1"/>
    <property type="molecule type" value="Genomic_DNA"/>
</dbReference>
<dbReference type="RefSeq" id="WP_011800493.1">
    <property type="nucleotide sequence ID" value="NC_008781.1"/>
</dbReference>
<dbReference type="SMR" id="A1VL71"/>
<dbReference type="STRING" id="365044.Pnap_1082"/>
<dbReference type="KEGG" id="pna:Pnap_1082"/>
<dbReference type="eggNOG" id="COG0137">
    <property type="taxonomic scope" value="Bacteria"/>
</dbReference>
<dbReference type="HOGENOM" id="CLU_032784_4_1_4"/>
<dbReference type="OrthoDB" id="9801641at2"/>
<dbReference type="UniPathway" id="UPA00068">
    <property type="reaction ID" value="UER00113"/>
</dbReference>
<dbReference type="Proteomes" id="UP000000644">
    <property type="component" value="Chromosome"/>
</dbReference>
<dbReference type="GO" id="GO:0005737">
    <property type="term" value="C:cytoplasm"/>
    <property type="evidence" value="ECO:0007669"/>
    <property type="project" value="UniProtKB-SubCell"/>
</dbReference>
<dbReference type="GO" id="GO:0004055">
    <property type="term" value="F:argininosuccinate synthase activity"/>
    <property type="evidence" value="ECO:0007669"/>
    <property type="project" value="UniProtKB-UniRule"/>
</dbReference>
<dbReference type="GO" id="GO:0005524">
    <property type="term" value="F:ATP binding"/>
    <property type="evidence" value="ECO:0007669"/>
    <property type="project" value="UniProtKB-UniRule"/>
</dbReference>
<dbReference type="GO" id="GO:0042803">
    <property type="term" value="F:protein homodimerization activity"/>
    <property type="evidence" value="ECO:0007669"/>
    <property type="project" value="InterPro"/>
</dbReference>
<dbReference type="GO" id="GO:0000053">
    <property type="term" value="P:argininosuccinate metabolic process"/>
    <property type="evidence" value="ECO:0007669"/>
    <property type="project" value="TreeGrafter"/>
</dbReference>
<dbReference type="GO" id="GO:0006526">
    <property type="term" value="P:L-arginine biosynthetic process"/>
    <property type="evidence" value="ECO:0007669"/>
    <property type="project" value="UniProtKB-UniRule"/>
</dbReference>
<dbReference type="GO" id="GO:0000050">
    <property type="term" value="P:urea cycle"/>
    <property type="evidence" value="ECO:0007669"/>
    <property type="project" value="TreeGrafter"/>
</dbReference>
<dbReference type="CDD" id="cd01999">
    <property type="entry name" value="ASS"/>
    <property type="match status" value="1"/>
</dbReference>
<dbReference type="Gene3D" id="1.10.287.400">
    <property type="match status" value="1"/>
</dbReference>
<dbReference type="Gene3D" id="3.90.1260.10">
    <property type="entry name" value="Argininosuccinate synthetase, chain A, domain 2"/>
    <property type="match status" value="1"/>
</dbReference>
<dbReference type="Gene3D" id="3.40.50.620">
    <property type="entry name" value="HUPs"/>
    <property type="match status" value="1"/>
</dbReference>
<dbReference type="HAMAP" id="MF_00581">
    <property type="entry name" value="Arg_succ_synth_type2"/>
    <property type="match status" value="1"/>
</dbReference>
<dbReference type="InterPro" id="IPR023437">
    <property type="entry name" value="Arg_succ_synth_type2_subfam"/>
</dbReference>
<dbReference type="InterPro" id="IPR048268">
    <property type="entry name" value="Arginosuc_syn_C"/>
</dbReference>
<dbReference type="InterPro" id="IPR048267">
    <property type="entry name" value="Arginosuc_syn_N"/>
</dbReference>
<dbReference type="InterPro" id="IPR001518">
    <property type="entry name" value="Arginosuc_synth"/>
</dbReference>
<dbReference type="InterPro" id="IPR018223">
    <property type="entry name" value="Arginosuc_synth_CS"/>
</dbReference>
<dbReference type="InterPro" id="IPR023434">
    <property type="entry name" value="Arginosuc_synth_type_1_subfam"/>
</dbReference>
<dbReference type="InterPro" id="IPR024074">
    <property type="entry name" value="AS_cat/multimer_dom_body"/>
</dbReference>
<dbReference type="InterPro" id="IPR024073">
    <property type="entry name" value="AS_multimer_C_tail"/>
</dbReference>
<dbReference type="InterPro" id="IPR014729">
    <property type="entry name" value="Rossmann-like_a/b/a_fold"/>
</dbReference>
<dbReference type="NCBIfam" id="TIGR00032">
    <property type="entry name" value="argG"/>
    <property type="match status" value="1"/>
</dbReference>
<dbReference type="NCBIfam" id="NF003779">
    <property type="entry name" value="PRK05370.1"/>
    <property type="match status" value="1"/>
</dbReference>
<dbReference type="PANTHER" id="PTHR11587">
    <property type="entry name" value="ARGININOSUCCINATE SYNTHASE"/>
    <property type="match status" value="1"/>
</dbReference>
<dbReference type="PANTHER" id="PTHR11587:SF2">
    <property type="entry name" value="ARGININOSUCCINATE SYNTHASE"/>
    <property type="match status" value="1"/>
</dbReference>
<dbReference type="Pfam" id="PF20979">
    <property type="entry name" value="Arginosuc_syn_C"/>
    <property type="match status" value="1"/>
</dbReference>
<dbReference type="Pfam" id="PF00764">
    <property type="entry name" value="Arginosuc_synth"/>
    <property type="match status" value="1"/>
</dbReference>
<dbReference type="SUPFAM" id="SSF52402">
    <property type="entry name" value="Adenine nucleotide alpha hydrolases-like"/>
    <property type="match status" value="1"/>
</dbReference>
<dbReference type="SUPFAM" id="SSF69864">
    <property type="entry name" value="Argininosuccinate synthetase, C-terminal domain"/>
    <property type="match status" value="1"/>
</dbReference>
<dbReference type="PROSITE" id="PS00564">
    <property type="entry name" value="ARGININOSUCCIN_SYN_1"/>
    <property type="match status" value="1"/>
</dbReference>
<dbReference type="PROSITE" id="PS00565">
    <property type="entry name" value="ARGININOSUCCIN_SYN_2"/>
    <property type="match status" value="1"/>
</dbReference>
<organism>
    <name type="scientific">Polaromonas naphthalenivorans (strain CJ2)</name>
    <dbReference type="NCBI Taxonomy" id="365044"/>
    <lineage>
        <taxon>Bacteria</taxon>
        <taxon>Pseudomonadati</taxon>
        <taxon>Pseudomonadota</taxon>
        <taxon>Betaproteobacteria</taxon>
        <taxon>Burkholderiales</taxon>
        <taxon>Comamonadaceae</taxon>
        <taxon>Polaromonas</taxon>
    </lineage>
</organism>
<accession>A1VL71</accession>
<protein>
    <recommendedName>
        <fullName evidence="1">Argininosuccinate synthase</fullName>
        <ecNumber evidence="1">6.3.4.5</ecNumber>
    </recommendedName>
    <alternativeName>
        <fullName evidence="1">Citrulline--aspartate ligase</fullName>
    </alternativeName>
</protein>
<proteinExistence type="inferred from homology"/>
<name>ASSY_POLNA</name>
<sequence length="445" mass="49201">MATILQNLPIGQKVGIAFSGGLDTSAALHWMKLKGAIPYAYTANLGQPDEPDYEDIPRKAMQYGAEQARLIDCRSQLAAEGLAALQAGAFHITTAGVTYFNTTPLGRAVTGTMLVAAMKEDDVNIWGDGSTYKGNDIERFYRYGLLTNPSLKIYKPWLDQLFIDELGGRAEMSEFMTQAGFGYKMSAEKAYSTDSNMLGATHEAKDLEHLSSGMKIVNPIMGVAFWKDEVEVKREEVTVRFEEGRPVALNGVEYPDLVELILEANRIGGRHGLGMSDQIENRIIEAKSRGIYEAPGLALLFIAYERLVTGIHNEDTIEQYRDSGRRLGRLLYQGRWFDSQAIMLRETAQRWVASAITGEVTIELRRGNDYSILNTESANLTYQPERLSMEKVEGAFTPLDRIGQLTMRNLDIVDTRAKLGIYAKSGVLSLGTGGDLLNLTGKAAE</sequence>
<keyword id="KW-0028">Amino-acid biosynthesis</keyword>
<keyword id="KW-0055">Arginine biosynthesis</keyword>
<keyword id="KW-0067">ATP-binding</keyword>
<keyword id="KW-0963">Cytoplasm</keyword>
<keyword id="KW-0436">Ligase</keyword>
<keyword id="KW-0547">Nucleotide-binding</keyword>
<keyword id="KW-1185">Reference proteome</keyword>
<reference key="1">
    <citation type="journal article" date="2009" name="Environ. Microbiol.">
        <title>The genome of Polaromonas naphthalenivorans strain CJ2, isolated from coal tar-contaminated sediment, reveals physiological and metabolic versatility and evolution through extensive horizontal gene transfer.</title>
        <authorList>
            <person name="Yagi J.M."/>
            <person name="Sims D."/>
            <person name="Brettin T."/>
            <person name="Bruce D."/>
            <person name="Madsen E.L."/>
        </authorList>
    </citation>
    <scope>NUCLEOTIDE SEQUENCE [LARGE SCALE GENOMIC DNA]</scope>
    <source>
        <strain>CJ2</strain>
    </source>
</reference>
<gene>
    <name evidence="1" type="primary">argG</name>
    <name type="ordered locus">Pnap_1082</name>
</gene>